<protein>
    <recommendedName>
        <fullName evidence="1">Translation factor GUF1, mitochondrial</fullName>
        <ecNumber>3.6.5.-</ecNumber>
    </recommendedName>
    <alternativeName>
        <fullName evidence="1">Elongation factor 4 homolog</fullName>
        <shortName evidence="1">EF-4</shortName>
    </alternativeName>
    <alternativeName>
        <fullName evidence="1">GTPase GUF1</fullName>
    </alternativeName>
    <alternativeName>
        <fullName evidence="1">Ribosomal back-translocase</fullName>
    </alternativeName>
</protein>
<evidence type="ECO:0000255" key="1">
    <source>
        <dbReference type="HAMAP-Rule" id="MF_03137"/>
    </source>
</evidence>
<evidence type="ECO:0000305" key="2"/>
<sequence>MLASQAIKRIFHRSWKPLVRFNHGKAPTAIESIKKRIEDIPIENYRNFSIVAHIDHGKSTLSDRLLELTGVIQSGGNKQVLDRLEVERERGITVKAQTCTMFYHDKRYGKDFLIHLVDTPGHVDFRGEVSRSYASCGGALLLVDASQGVQAQTVANFYLAYSMNLKLIPVINKIDLDHADIAQAEDQIENTFELPKEDTIRVSAKTGLNVKEDLLPAIIDRIPPPTGCLDKPFRALLVDSWYDSYVGVVLLVHIVDGTVRKGDKVSSAQTGKKYEIKEIGIMFPDRTPTGILSTGQVGYVVPGMKASKDAKIGDTLMHLGREQETEVLPGFEEPKPMVFVGAFPSDGEEFKALNDDVNRLVLNDRSVSLKRETSNALGQGWRLGFLGSLHASVFRERLENEYGSKLIITQPTVPYMIKYYDGHERLITNPDEFPDLAERRNKVQAIQEPYVEAIMTLPQEYLGNVIKLCDHNRGQQTEITYLNMTGQVMLKYDLPLGQLVEDFFGKLKSVSRGYASLDYEDIGYRDSDVVKLELLINGSSVDALAQVMHSSQVERVGRAWVKKFKEYIKAQLFEVVIQARANSKIIARETIKAKRKDVLQKLHASDISRRKKLLVKQKEGKKHLKSVGNVQINQDAYQAFLRR</sequence>
<name>GUF1_ZYGRC</name>
<organism>
    <name type="scientific">Zygosaccharomyces rouxii (strain ATCC 2623 / CBS 732 / NBRC 1130 / NCYC 568 / NRRL Y-229)</name>
    <dbReference type="NCBI Taxonomy" id="559307"/>
    <lineage>
        <taxon>Eukaryota</taxon>
        <taxon>Fungi</taxon>
        <taxon>Dikarya</taxon>
        <taxon>Ascomycota</taxon>
        <taxon>Saccharomycotina</taxon>
        <taxon>Saccharomycetes</taxon>
        <taxon>Saccharomycetales</taxon>
        <taxon>Saccharomycetaceae</taxon>
        <taxon>Zygosaccharomyces</taxon>
    </lineage>
</organism>
<reference key="1">
    <citation type="journal article" date="2009" name="Genome Res.">
        <title>Comparative genomics of protoploid Saccharomycetaceae.</title>
        <authorList>
            <consortium name="The Genolevures Consortium"/>
            <person name="Souciet J.-L."/>
            <person name="Dujon B."/>
            <person name="Gaillardin C."/>
            <person name="Johnston M."/>
            <person name="Baret P.V."/>
            <person name="Cliften P."/>
            <person name="Sherman D.J."/>
            <person name="Weissenbach J."/>
            <person name="Westhof E."/>
            <person name="Wincker P."/>
            <person name="Jubin C."/>
            <person name="Poulain J."/>
            <person name="Barbe V."/>
            <person name="Segurens B."/>
            <person name="Artiguenave F."/>
            <person name="Anthouard V."/>
            <person name="Vacherie B."/>
            <person name="Val M.-E."/>
            <person name="Fulton R.S."/>
            <person name="Minx P."/>
            <person name="Wilson R."/>
            <person name="Durrens P."/>
            <person name="Jean G."/>
            <person name="Marck C."/>
            <person name="Martin T."/>
            <person name="Nikolski M."/>
            <person name="Rolland T."/>
            <person name="Seret M.-L."/>
            <person name="Casaregola S."/>
            <person name="Despons L."/>
            <person name="Fairhead C."/>
            <person name="Fischer G."/>
            <person name="Lafontaine I."/>
            <person name="Leh V."/>
            <person name="Lemaire M."/>
            <person name="de Montigny J."/>
            <person name="Neuveglise C."/>
            <person name="Thierry A."/>
            <person name="Blanc-Lenfle I."/>
            <person name="Bleykasten C."/>
            <person name="Diffels J."/>
            <person name="Fritsch E."/>
            <person name="Frangeul L."/>
            <person name="Goeffon A."/>
            <person name="Jauniaux N."/>
            <person name="Kachouri-Lafond R."/>
            <person name="Payen C."/>
            <person name="Potier S."/>
            <person name="Pribylova L."/>
            <person name="Ozanne C."/>
            <person name="Richard G.-F."/>
            <person name="Sacerdot C."/>
            <person name="Straub M.-L."/>
            <person name="Talla E."/>
        </authorList>
    </citation>
    <scope>NUCLEOTIDE SEQUENCE [LARGE SCALE GENOMIC DNA]</scope>
    <source>
        <strain>ATCC 2623 / CBS 732 / BCRC 21506 / NBRC 1130 / NCYC 568 / NRRL Y-229</strain>
    </source>
</reference>
<keyword id="KW-0342">GTP-binding</keyword>
<keyword id="KW-0378">Hydrolase</keyword>
<keyword id="KW-0472">Membrane</keyword>
<keyword id="KW-0496">Mitochondrion</keyword>
<keyword id="KW-0999">Mitochondrion inner membrane</keyword>
<keyword id="KW-0547">Nucleotide-binding</keyword>
<keyword id="KW-0648">Protein biosynthesis</keyword>
<keyword id="KW-1185">Reference proteome</keyword>
<keyword id="KW-0809">Transit peptide</keyword>
<comment type="function">
    <text evidence="1">Promotes mitochondrial protein synthesis. May act as a fidelity factor of the translation reaction, by catalyzing a one-codon backward translocation of tRNAs on improperly translocated ribosomes. Binds to mitochondrial ribosomes in a GTP-dependent manner.</text>
</comment>
<comment type="catalytic activity">
    <reaction evidence="1">
        <text>GTP + H2O = GDP + phosphate + H(+)</text>
        <dbReference type="Rhea" id="RHEA:19669"/>
        <dbReference type="ChEBI" id="CHEBI:15377"/>
        <dbReference type="ChEBI" id="CHEBI:15378"/>
        <dbReference type="ChEBI" id="CHEBI:37565"/>
        <dbReference type="ChEBI" id="CHEBI:43474"/>
        <dbReference type="ChEBI" id="CHEBI:58189"/>
    </reaction>
</comment>
<comment type="subcellular location">
    <subcellularLocation>
        <location evidence="1">Mitochondrion inner membrane</location>
        <topology evidence="1">Peripheral membrane protein</topology>
        <orientation evidence="1">Matrix side</orientation>
    </subcellularLocation>
</comment>
<comment type="similarity">
    <text evidence="2">Belongs to the TRAFAC class translation factor GTPase superfamily. Classic translation factor GTPase family. LepA subfamily.</text>
</comment>
<proteinExistence type="inferred from homology"/>
<gene>
    <name evidence="1" type="primary">GUF1</name>
    <name type="ordered locus">ZYRO0D14696g</name>
</gene>
<feature type="transit peptide" description="Mitochondrion" evidence="1">
    <location>
        <begin position="1"/>
        <end position="18"/>
    </location>
</feature>
<feature type="chain" id="PRO_0000402910" description="Translation factor GUF1, mitochondrial">
    <location>
        <begin position="19"/>
        <end position="643"/>
    </location>
</feature>
<feature type="domain" description="tr-type G">
    <location>
        <begin position="43"/>
        <end position="226"/>
    </location>
</feature>
<feature type="binding site" evidence="1">
    <location>
        <begin position="52"/>
        <end position="59"/>
    </location>
    <ligand>
        <name>GTP</name>
        <dbReference type="ChEBI" id="CHEBI:37565"/>
    </ligand>
</feature>
<feature type="binding site" evidence="1">
    <location>
        <begin position="118"/>
        <end position="122"/>
    </location>
    <ligand>
        <name>GTP</name>
        <dbReference type="ChEBI" id="CHEBI:37565"/>
    </ligand>
</feature>
<feature type="binding site" evidence="1">
    <location>
        <begin position="172"/>
        <end position="175"/>
    </location>
    <ligand>
        <name>GTP</name>
        <dbReference type="ChEBI" id="CHEBI:37565"/>
    </ligand>
</feature>
<dbReference type="EC" id="3.6.5.-"/>
<dbReference type="EMBL" id="CU928176">
    <property type="protein sequence ID" value="CAR28136.1"/>
    <property type="molecule type" value="Genomic_DNA"/>
</dbReference>
<dbReference type="RefSeq" id="XP_002497069.1">
    <property type="nucleotide sequence ID" value="XM_002497024.1"/>
</dbReference>
<dbReference type="SMR" id="C5DWG7"/>
<dbReference type="FunCoup" id="C5DWG7">
    <property type="interactions" value="766"/>
</dbReference>
<dbReference type="STRING" id="559307.C5DWG7"/>
<dbReference type="GeneID" id="8204334"/>
<dbReference type="KEGG" id="zro:ZYRO0D14696g"/>
<dbReference type="HOGENOM" id="CLU_009995_3_1_1"/>
<dbReference type="InParanoid" id="C5DWG7"/>
<dbReference type="Proteomes" id="UP000008536">
    <property type="component" value="Chromosome D"/>
</dbReference>
<dbReference type="GO" id="GO:0005743">
    <property type="term" value="C:mitochondrial inner membrane"/>
    <property type="evidence" value="ECO:0007669"/>
    <property type="project" value="UniProtKB-SubCell"/>
</dbReference>
<dbReference type="GO" id="GO:0005759">
    <property type="term" value="C:mitochondrial matrix"/>
    <property type="evidence" value="ECO:0007669"/>
    <property type="project" value="UniProtKB-UniRule"/>
</dbReference>
<dbReference type="GO" id="GO:0005525">
    <property type="term" value="F:GTP binding"/>
    <property type="evidence" value="ECO:0007669"/>
    <property type="project" value="UniProtKB-UniRule"/>
</dbReference>
<dbReference type="GO" id="GO:0003924">
    <property type="term" value="F:GTPase activity"/>
    <property type="evidence" value="ECO:0007669"/>
    <property type="project" value="UniProtKB-UniRule"/>
</dbReference>
<dbReference type="GO" id="GO:0097177">
    <property type="term" value="F:mitochondrial ribosome binding"/>
    <property type="evidence" value="ECO:0007669"/>
    <property type="project" value="TreeGrafter"/>
</dbReference>
<dbReference type="GO" id="GO:0045727">
    <property type="term" value="P:positive regulation of translation"/>
    <property type="evidence" value="ECO:0007669"/>
    <property type="project" value="UniProtKB-UniRule"/>
</dbReference>
<dbReference type="GO" id="GO:0006412">
    <property type="term" value="P:translation"/>
    <property type="evidence" value="ECO:0007669"/>
    <property type="project" value="UniProtKB-KW"/>
</dbReference>
<dbReference type="CDD" id="cd03699">
    <property type="entry name" value="EF4_II"/>
    <property type="match status" value="1"/>
</dbReference>
<dbReference type="CDD" id="cd16260">
    <property type="entry name" value="EF4_III"/>
    <property type="match status" value="1"/>
</dbReference>
<dbReference type="CDD" id="cd01890">
    <property type="entry name" value="LepA"/>
    <property type="match status" value="1"/>
</dbReference>
<dbReference type="CDD" id="cd03709">
    <property type="entry name" value="lepA_C"/>
    <property type="match status" value="1"/>
</dbReference>
<dbReference type="FunFam" id="3.40.50.300:FF:000078">
    <property type="entry name" value="Elongation factor 4"/>
    <property type="match status" value="1"/>
</dbReference>
<dbReference type="FunFam" id="2.40.30.10:FF:000015">
    <property type="entry name" value="Translation factor GUF1, mitochondrial"/>
    <property type="match status" value="1"/>
</dbReference>
<dbReference type="FunFam" id="3.30.70.240:FF:000007">
    <property type="entry name" value="Translation factor GUF1, mitochondrial"/>
    <property type="match status" value="1"/>
</dbReference>
<dbReference type="FunFam" id="3.30.70.2570:FF:000001">
    <property type="entry name" value="Translation factor GUF1, mitochondrial"/>
    <property type="match status" value="1"/>
</dbReference>
<dbReference type="FunFam" id="3.30.70.870:FF:000004">
    <property type="entry name" value="Translation factor GUF1, mitochondrial"/>
    <property type="match status" value="1"/>
</dbReference>
<dbReference type="Gene3D" id="3.30.70.240">
    <property type="match status" value="1"/>
</dbReference>
<dbReference type="Gene3D" id="3.30.70.2570">
    <property type="entry name" value="Elongation factor 4, C-terminal domain"/>
    <property type="match status" value="1"/>
</dbReference>
<dbReference type="Gene3D" id="3.30.70.870">
    <property type="entry name" value="Elongation Factor G (Translational Gtpase), domain 3"/>
    <property type="match status" value="1"/>
</dbReference>
<dbReference type="Gene3D" id="3.40.50.300">
    <property type="entry name" value="P-loop containing nucleotide triphosphate hydrolases"/>
    <property type="match status" value="1"/>
</dbReference>
<dbReference type="Gene3D" id="2.40.30.10">
    <property type="entry name" value="Translation factors"/>
    <property type="match status" value="1"/>
</dbReference>
<dbReference type="HAMAP" id="MF_00071">
    <property type="entry name" value="LepA"/>
    <property type="match status" value="1"/>
</dbReference>
<dbReference type="InterPro" id="IPR006297">
    <property type="entry name" value="EF-4"/>
</dbReference>
<dbReference type="InterPro" id="IPR035647">
    <property type="entry name" value="EFG_III/V"/>
</dbReference>
<dbReference type="InterPro" id="IPR000640">
    <property type="entry name" value="EFG_V-like"/>
</dbReference>
<dbReference type="InterPro" id="IPR004161">
    <property type="entry name" value="EFTu-like_2"/>
</dbReference>
<dbReference type="InterPro" id="IPR031157">
    <property type="entry name" value="G_TR_CS"/>
</dbReference>
<dbReference type="InterPro" id="IPR038363">
    <property type="entry name" value="LepA_C_sf"/>
</dbReference>
<dbReference type="InterPro" id="IPR013842">
    <property type="entry name" value="LepA_CTD"/>
</dbReference>
<dbReference type="InterPro" id="IPR035654">
    <property type="entry name" value="LepA_IV"/>
</dbReference>
<dbReference type="InterPro" id="IPR027417">
    <property type="entry name" value="P-loop_NTPase"/>
</dbReference>
<dbReference type="InterPro" id="IPR005225">
    <property type="entry name" value="Small_GTP-bd"/>
</dbReference>
<dbReference type="InterPro" id="IPR000795">
    <property type="entry name" value="T_Tr_GTP-bd_dom"/>
</dbReference>
<dbReference type="InterPro" id="IPR009000">
    <property type="entry name" value="Transl_B-barrel_sf"/>
</dbReference>
<dbReference type="NCBIfam" id="TIGR01393">
    <property type="entry name" value="lepA"/>
    <property type="match status" value="1"/>
</dbReference>
<dbReference type="NCBIfam" id="TIGR00231">
    <property type="entry name" value="small_GTP"/>
    <property type="match status" value="1"/>
</dbReference>
<dbReference type="PANTHER" id="PTHR43512:SF7">
    <property type="entry name" value="TRANSLATION FACTOR GUF1, MITOCHONDRIAL"/>
    <property type="match status" value="1"/>
</dbReference>
<dbReference type="PANTHER" id="PTHR43512">
    <property type="entry name" value="TRANSLATION FACTOR GUF1-RELATED"/>
    <property type="match status" value="1"/>
</dbReference>
<dbReference type="Pfam" id="PF00679">
    <property type="entry name" value="EFG_C"/>
    <property type="match status" value="1"/>
</dbReference>
<dbReference type="Pfam" id="PF00009">
    <property type="entry name" value="GTP_EFTU"/>
    <property type="match status" value="1"/>
</dbReference>
<dbReference type="Pfam" id="PF03144">
    <property type="entry name" value="GTP_EFTU_D2"/>
    <property type="match status" value="1"/>
</dbReference>
<dbReference type="Pfam" id="PF06421">
    <property type="entry name" value="LepA_C"/>
    <property type="match status" value="1"/>
</dbReference>
<dbReference type="PRINTS" id="PR00315">
    <property type="entry name" value="ELONGATNFCT"/>
</dbReference>
<dbReference type="SUPFAM" id="SSF54980">
    <property type="entry name" value="EF-G C-terminal domain-like"/>
    <property type="match status" value="2"/>
</dbReference>
<dbReference type="SUPFAM" id="SSF52540">
    <property type="entry name" value="P-loop containing nucleoside triphosphate hydrolases"/>
    <property type="match status" value="1"/>
</dbReference>
<dbReference type="SUPFAM" id="SSF50447">
    <property type="entry name" value="Translation proteins"/>
    <property type="match status" value="1"/>
</dbReference>
<dbReference type="PROSITE" id="PS00301">
    <property type="entry name" value="G_TR_1"/>
    <property type="match status" value="1"/>
</dbReference>
<dbReference type="PROSITE" id="PS51722">
    <property type="entry name" value="G_TR_2"/>
    <property type="match status" value="1"/>
</dbReference>
<accession>C5DWG7</accession>